<sequence length="188" mass="21164">MALKIAQELRAGNVFMIGNDPMVVLKTEYSRSGRNAAVVKMKYKNLLTGAPSESVFKADDKMDQIILDKKECTYSYFADPMYVFMDTDYNQYEVEADSMGDAIHYLEDGMAAEVTFYNEKAISVELPTTLVREIEYTEPAVKGDTSSGKVLKMAKIKGGFEIQVPLFCSTGDKIEIDTRTHEYRSRAN</sequence>
<evidence type="ECO:0000255" key="1">
    <source>
        <dbReference type="HAMAP-Rule" id="MF_00141"/>
    </source>
</evidence>
<proteinExistence type="inferred from homology"/>
<organism>
    <name type="scientific">Ralstonia nicotianae (strain ATCC BAA-1114 / GMI1000)</name>
    <name type="common">Ralstonia solanacearum</name>
    <dbReference type="NCBI Taxonomy" id="267608"/>
    <lineage>
        <taxon>Bacteria</taxon>
        <taxon>Pseudomonadati</taxon>
        <taxon>Pseudomonadota</taxon>
        <taxon>Betaproteobacteria</taxon>
        <taxon>Burkholderiales</taxon>
        <taxon>Burkholderiaceae</taxon>
        <taxon>Ralstonia</taxon>
        <taxon>Ralstonia solanacearum species complex</taxon>
    </lineage>
</organism>
<keyword id="KW-0963">Cytoplasm</keyword>
<keyword id="KW-0251">Elongation factor</keyword>
<keyword id="KW-0648">Protein biosynthesis</keyword>
<keyword id="KW-1185">Reference proteome</keyword>
<protein>
    <recommendedName>
        <fullName evidence="1">Elongation factor P</fullName>
        <shortName evidence="1">EF-P</shortName>
    </recommendedName>
</protein>
<name>EFP_RALN1</name>
<feature type="chain" id="PRO_0000094313" description="Elongation factor P">
    <location>
        <begin position="1"/>
        <end position="188"/>
    </location>
</feature>
<comment type="function">
    <text evidence="1">Involved in peptide bond synthesis. Stimulates efficient translation and peptide-bond synthesis on native or reconstituted 70S ribosomes in vitro. Probably functions indirectly by altering the affinity of the ribosome for aminoacyl-tRNA, thus increasing their reactivity as acceptors for peptidyl transferase.</text>
</comment>
<comment type="pathway">
    <text evidence="1">Protein biosynthesis; polypeptide chain elongation.</text>
</comment>
<comment type="subcellular location">
    <subcellularLocation>
        <location evidence="1">Cytoplasm</location>
    </subcellularLocation>
</comment>
<comment type="similarity">
    <text evidence="1">Belongs to the elongation factor P family.</text>
</comment>
<dbReference type="EMBL" id="AL646052">
    <property type="protein sequence ID" value="CAD14771.1"/>
    <property type="molecule type" value="Genomic_DNA"/>
</dbReference>
<dbReference type="SMR" id="Q8Y0H5"/>
<dbReference type="STRING" id="267608.RSc1069"/>
<dbReference type="EnsemblBacteria" id="CAD14771">
    <property type="protein sequence ID" value="CAD14771"/>
    <property type="gene ID" value="RSc1069"/>
</dbReference>
<dbReference type="KEGG" id="rso:RSc1069"/>
<dbReference type="eggNOG" id="COG0231">
    <property type="taxonomic scope" value="Bacteria"/>
</dbReference>
<dbReference type="HOGENOM" id="CLU_074944_2_1_4"/>
<dbReference type="UniPathway" id="UPA00345"/>
<dbReference type="Proteomes" id="UP000001436">
    <property type="component" value="Chromosome"/>
</dbReference>
<dbReference type="GO" id="GO:0005737">
    <property type="term" value="C:cytoplasm"/>
    <property type="evidence" value="ECO:0007669"/>
    <property type="project" value="UniProtKB-SubCell"/>
</dbReference>
<dbReference type="GO" id="GO:0003746">
    <property type="term" value="F:translation elongation factor activity"/>
    <property type="evidence" value="ECO:0007669"/>
    <property type="project" value="UniProtKB-UniRule"/>
</dbReference>
<dbReference type="GO" id="GO:0043043">
    <property type="term" value="P:peptide biosynthetic process"/>
    <property type="evidence" value="ECO:0007669"/>
    <property type="project" value="InterPro"/>
</dbReference>
<dbReference type="CDD" id="cd04470">
    <property type="entry name" value="S1_EF-P_repeat_1"/>
    <property type="match status" value="1"/>
</dbReference>
<dbReference type="CDD" id="cd05794">
    <property type="entry name" value="S1_EF-P_repeat_2"/>
    <property type="match status" value="1"/>
</dbReference>
<dbReference type="FunFam" id="2.30.30.30:FF:000003">
    <property type="entry name" value="Elongation factor P"/>
    <property type="match status" value="1"/>
</dbReference>
<dbReference type="FunFam" id="2.40.50.140:FF:000004">
    <property type="entry name" value="Elongation factor P"/>
    <property type="match status" value="1"/>
</dbReference>
<dbReference type="FunFam" id="2.40.50.140:FF:000009">
    <property type="entry name" value="Elongation factor P"/>
    <property type="match status" value="1"/>
</dbReference>
<dbReference type="Gene3D" id="2.30.30.30">
    <property type="match status" value="1"/>
</dbReference>
<dbReference type="Gene3D" id="2.40.50.140">
    <property type="entry name" value="Nucleic acid-binding proteins"/>
    <property type="match status" value="2"/>
</dbReference>
<dbReference type="HAMAP" id="MF_00141">
    <property type="entry name" value="EF_P"/>
    <property type="match status" value="1"/>
</dbReference>
<dbReference type="InterPro" id="IPR015365">
    <property type="entry name" value="Elong-fact-P_C"/>
</dbReference>
<dbReference type="InterPro" id="IPR012340">
    <property type="entry name" value="NA-bd_OB-fold"/>
</dbReference>
<dbReference type="InterPro" id="IPR014722">
    <property type="entry name" value="Rib_uL2_dom2"/>
</dbReference>
<dbReference type="InterPro" id="IPR020599">
    <property type="entry name" value="Transl_elong_fac_P/YeiP"/>
</dbReference>
<dbReference type="InterPro" id="IPR013185">
    <property type="entry name" value="Transl_elong_KOW-like"/>
</dbReference>
<dbReference type="InterPro" id="IPR001059">
    <property type="entry name" value="Transl_elong_P/YeiP_cen"/>
</dbReference>
<dbReference type="InterPro" id="IPR013852">
    <property type="entry name" value="Transl_elong_P/YeiP_CS"/>
</dbReference>
<dbReference type="InterPro" id="IPR011768">
    <property type="entry name" value="Transl_elongation_fac_P"/>
</dbReference>
<dbReference type="InterPro" id="IPR008991">
    <property type="entry name" value="Translation_prot_SH3-like_sf"/>
</dbReference>
<dbReference type="NCBIfam" id="TIGR00038">
    <property type="entry name" value="efp"/>
    <property type="match status" value="1"/>
</dbReference>
<dbReference type="NCBIfam" id="NF001810">
    <property type="entry name" value="PRK00529.1"/>
    <property type="match status" value="1"/>
</dbReference>
<dbReference type="PANTHER" id="PTHR30053">
    <property type="entry name" value="ELONGATION FACTOR P"/>
    <property type="match status" value="1"/>
</dbReference>
<dbReference type="PANTHER" id="PTHR30053:SF12">
    <property type="entry name" value="ELONGATION FACTOR P (EF-P) FAMILY PROTEIN"/>
    <property type="match status" value="1"/>
</dbReference>
<dbReference type="Pfam" id="PF01132">
    <property type="entry name" value="EFP"/>
    <property type="match status" value="1"/>
</dbReference>
<dbReference type="Pfam" id="PF08207">
    <property type="entry name" value="EFP_N"/>
    <property type="match status" value="1"/>
</dbReference>
<dbReference type="Pfam" id="PF09285">
    <property type="entry name" value="Elong-fact-P_C"/>
    <property type="match status" value="1"/>
</dbReference>
<dbReference type="PIRSF" id="PIRSF005901">
    <property type="entry name" value="EF-P"/>
    <property type="match status" value="1"/>
</dbReference>
<dbReference type="SMART" id="SM01185">
    <property type="entry name" value="EFP"/>
    <property type="match status" value="1"/>
</dbReference>
<dbReference type="SMART" id="SM00841">
    <property type="entry name" value="Elong-fact-P_C"/>
    <property type="match status" value="1"/>
</dbReference>
<dbReference type="SUPFAM" id="SSF50249">
    <property type="entry name" value="Nucleic acid-binding proteins"/>
    <property type="match status" value="2"/>
</dbReference>
<dbReference type="SUPFAM" id="SSF50104">
    <property type="entry name" value="Translation proteins SH3-like domain"/>
    <property type="match status" value="1"/>
</dbReference>
<dbReference type="PROSITE" id="PS01275">
    <property type="entry name" value="EFP"/>
    <property type="match status" value="1"/>
</dbReference>
<accession>Q8Y0H5</accession>
<gene>
    <name evidence="1" type="primary">efp</name>
    <name type="ordered locus">RSc1069</name>
    <name type="ORF">RS04133</name>
</gene>
<reference key="1">
    <citation type="journal article" date="2002" name="Nature">
        <title>Genome sequence of the plant pathogen Ralstonia solanacearum.</title>
        <authorList>
            <person name="Salanoubat M."/>
            <person name="Genin S."/>
            <person name="Artiguenave F."/>
            <person name="Gouzy J."/>
            <person name="Mangenot S."/>
            <person name="Arlat M."/>
            <person name="Billault A."/>
            <person name="Brottier P."/>
            <person name="Camus J.-C."/>
            <person name="Cattolico L."/>
            <person name="Chandler M."/>
            <person name="Choisne N."/>
            <person name="Claudel-Renard C."/>
            <person name="Cunnac S."/>
            <person name="Demange N."/>
            <person name="Gaspin C."/>
            <person name="Lavie M."/>
            <person name="Moisan A."/>
            <person name="Robert C."/>
            <person name="Saurin W."/>
            <person name="Schiex T."/>
            <person name="Siguier P."/>
            <person name="Thebault P."/>
            <person name="Whalen M."/>
            <person name="Wincker P."/>
            <person name="Levy M."/>
            <person name="Weissenbach J."/>
            <person name="Boucher C.A."/>
        </authorList>
    </citation>
    <scope>NUCLEOTIDE SEQUENCE [LARGE SCALE GENOMIC DNA]</scope>
    <source>
        <strain>ATCC BAA-1114 / GMI1000</strain>
    </source>
</reference>